<sequence>MGKVLVMLTAAAAVVACSVATVMVRRRMKGRRKWRRVVGLLKDLEEACETPLGRLRQMVDAIAVEMQAGLVSEGGSKLKMLLTFVDDLPNGSETGTYYALHLGGSYFRIIKVHLGGQRSSLEVQDVERHSIPTSLMNSTSEVLFDFLASSLQRFIEKEGNDFSLSQPLKRELAFTFSFPVKQTSISSGVLIKWTKGFAISEMAGEDIAECLQGALNKRGLDIRVAALVNDTVGALSFGHFHDPDTIAAVVFGTGSNACYLERTDAIIKCQNPRTTSGSMVVNMEWGNFWSSRLPRTSYDLELDAESMNSNDMGFEKMIGGMYLGDIVRRVILRMSQESDIFGPISSILSTPFVLRTNSVSAMHEDDTSELQEVARILKDLGVSEVPMKVRKLVVKICDVVTRRAARLAAAGIAGILKKVGRDGSGGGRRSDKQIMRRTVVAVEGGLYLNYRMFREYMDEALRDILGEDVAQHVVVKAMEDGSSIGSALLLASSQSVQTIPSV</sequence>
<name>HXK4_ARATH</name>
<organism>
    <name type="scientific">Arabidopsis thaliana</name>
    <name type="common">Mouse-ear cress</name>
    <dbReference type="NCBI Taxonomy" id="3702"/>
    <lineage>
        <taxon>Eukaryota</taxon>
        <taxon>Viridiplantae</taxon>
        <taxon>Streptophyta</taxon>
        <taxon>Embryophyta</taxon>
        <taxon>Tracheophyta</taxon>
        <taxon>Spermatophyta</taxon>
        <taxon>Magnoliopsida</taxon>
        <taxon>eudicotyledons</taxon>
        <taxon>Gunneridae</taxon>
        <taxon>Pentapetalae</taxon>
        <taxon>rosids</taxon>
        <taxon>malvids</taxon>
        <taxon>Brassicales</taxon>
        <taxon>Brassicaceae</taxon>
        <taxon>Camelineae</taxon>
        <taxon>Arabidopsis</taxon>
    </lineage>
</organism>
<evidence type="ECO:0000250" key="1">
    <source>
        <dbReference type="UniProtKB" id="P93834"/>
    </source>
</evidence>
<evidence type="ECO:0000250" key="2">
    <source>
        <dbReference type="UniProtKB" id="Q8LQ68"/>
    </source>
</evidence>
<evidence type="ECO:0000255" key="3"/>
<evidence type="ECO:0000255" key="4">
    <source>
        <dbReference type="PROSITE-ProRule" id="PRU01084"/>
    </source>
</evidence>
<evidence type="ECO:0000269" key="5">
    <source>
    </source>
</evidence>
<evidence type="ECO:0000305" key="6"/>
<gene>
    <name type="ordered locus">At3g20040</name>
    <name type="ORF">MAL21.4</name>
</gene>
<feature type="chain" id="PRO_0000259632" description="Hexokinase-4">
    <location>
        <begin position="1"/>
        <end position="502"/>
    </location>
</feature>
<feature type="transmembrane region" description="Helical" evidence="3">
    <location>
        <begin position="4"/>
        <end position="24"/>
    </location>
</feature>
<feature type="domain" description="Hexokinase" evidence="4">
    <location>
        <begin position="35"/>
        <end position="491"/>
    </location>
</feature>
<feature type="region of interest" description="Hexokinase small subdomain" evidence="4">
    <location>
        <begin position="90"/>
        <end position="228"/>
    </location>
</feature>
<feature type="region of interest" description="Hexokinase large subdomain" evidence="4">
    <location>
        <begin position="229"/>
        <end position="480"/>
    </location>
</feature>
<feature type="binding site" evidence="2">
    <location>
        <position position="104"/>
    </location>
    <ligand>
        <name>ADP</name>
        <dbReference type="ChEBI" id="CHEBI:456216"/>
    </ligand>
</feature>
<feature type="binding site" evidence="2">
    <location>
        <position position="105"/>
    </location>
    <ligand>
        <name>ADP</name>
        <dbReference type="ChEBI" id="CHEBI:456216"/>
    </ligand>
</feature>
<feature type="binding site" evidence="2">
    <location>
        <position position="194"/>
    </location>
    <ligand>
        <name>D-glucose</name>
        <dbReference type="ChEBI" id="CHEBI:4167"/>
    </ligand>
</feature>
<feature type="binding site" evidence="2">
    <location>
        <position position="195"/>
    </location>
    <ligand>
        <name>D-glucose</name>
        <dbReference type="ChEBI" id="CHEBI:4167"/>
    </ligand>
</feature>
<feature type="binding site" evidence="2">
    <location>
        <position position="229"/>
    </location>
    <ligand>
        <name>D-glucose</name>
        <dbReference type="ChEBI" id="CHEBI:4167"/>
    </ligand>
</feature>
<feature type="binding site" evidence="2">
    <location>
        <position position="230"/>
    </location>
    <ligand>
        <name>D-glucose</name>
        <dbReference type="ChEBI" id="CHEBI:4167"/>
    </ligand>
</feature>
<feature type="binding site" evidence="2">
    <location>
        <position position="253"/>
    </location>
    <ligand>
        <name>ADP</name>
        <dbReference type="ChEBI" id="CHEBI:456216"/>
    </ligand>
</feature>
<feature type="binding site" evidence="2">
    <location>
        <position position="256"/>
    </location>
    <ligand>
        <name>D-glucose</name>
        <dbReference type="ChEBI" id="CHEBI:4167"/>
    </ligand>
</feature>
<feature type="binding site" evidence="2">
    <location>
        <position position="284"/>
    </location>
    <ligand>
        <name>D-glucose</name>
        <dbReference type="ChEBI" id="CHEBI:4167"/>
    </ligand>
</feature>
<feature type="binding site" evidence="2">
    <location>
        <position position="315"/>
    </location>
    <ligand>
        <name>D-glucose</name>
        <dbReference type="ChEBI" id="CHEBI:4167"/>
    </ligand>
</feature>
<feature type="binding site" evidence="2">
    <location>
        <position position="445"/>
    </location>
    <ligand>
        <name>ADP</name>
        <dbReference type="ChEBI" id="CHEBI:456216"/>
    </ligand>
</feature>
<feature type="sequence conflict" description="In Ref. 3; BAD93730." evidence="6" ref="3">
    <original>V</original>
    <variation>I</variation>
    <location>
        <position position="502"/>
    </location>
</feature>
<dbReference type="EC" id="2.7.1.1" evidence="1"/>
<dbReference type="EMBL" id="AP000383">
    <property type="protein sequence ID" value="BAB01861.1"/>
    <property type="molecule type" value="Genomic_DNA"/>
</dbReference>
<dbReference type="EMBL" id="CP002686">
    <property type="protein sequence ID" value="AEE76323.1"/>
    <property type="molecule type" value="Genomic_DNA"/>
</dbReference>
<dbReference type="EMBL" id="AK221726">
    <property type="protein sequence ID" value="BAD93730.1"/>
    <property type="status" value="ALT_INIT"/>
    <property type="molecule type" value="mRNA"/>
</dbReference>
<dbReference type="SMR" id="Q56XE8"/>
<dbReference type="BioGRID" id="6875">
    <property type="interactions" value="1"/>
</dbReference>
<dbReference type="FunCoup" id="Q56XE8">
    <property type="interactions" value="2663"/>
</dbReference>
<dbReference type="STRING" id="3702.Q56XE8"/>
<dbReference type="PaxDb" id="3702-AT3G20040.1"/>
<dbReference type="ProteomicsDB" id="232205"/>
<dbReference type="EnsemblPlants" id="AT3G20040.1">
    <property type="protein sequence ID" value="AT3G20040.1"/>
    <property type="gene ID" value="AT3G20040"/>
</dbReference>
<dbReference type="Gramene" id="AT3G20040.1">
    <property type="protein sequence ID" value="AT3G20040.1"/>
    <property type="gene ID" value="AT3G20040"/>
</dbReference>
<dbReference type="KEGG" id="ath:AT3G20040"/>
<dbReference type="Araport" id="AT3G20040"/>
<dbReference type="TAIR" id="AT3G20040">
    <property type="gene designation" value="ATHXK4"/>
</dbReference>
<dbReference type="eggNOG" id="KOG1369">
    <property type="taxonomic scope" value="Eukaryota"/>
</dbReference>
<dbReference type="HOGENOM" id="CLU_014393_5_1_1"/>
<dbReference type="InParanoid" id="Q56XE8"/>
<dbReference type="OMA" id="TNIRVCD"/>
<dbReference type="OrthoDB" id="419537at2759"/>
<dbReference type="PhylomeDB" id="Q56XE8"/>
<dbReference type="BioCyc" id="ARA:AT3G20040-MONOMER"/>
<dbReference type="UniPathway" id="UPA00109">
    <property type="reaction ID" value="UER00180"/>
</dbReference>
<dbReference type="UniPathway" id="UPA00242"/>
<dbReference type="PRO" id="PR:Q56XE8"/>
<dbReference type="Proteomes" id="UP000006548">
    <property type="component" value="Chromosome 3"/>
</dbReference>
<dbReference type="ExpressionAtlas" id="Q56XE8">
    <property type="expression patterns" value="baseline and differential"/>
</dbReference>
<dbReference type="GO" id="GO:0005741">
    <property type="term" value="C:mitochondrial outer membrane"/>
    <property type="evidence" value="ECO:0007669"/>
    <property type="project" value="UniProtKB-SubCell"/>
</dbReference>
<dbReference type="GO" id="GO:0005739">
    <property type="term" value="C:mitochondrion"/>
    <property type="evidence" value="ECO:0000314"/>
    <property type="project" value="TAIR"/>
</dbReference>
<dbReference type="GO" id="GO:0005524">
    <property type="term" value="F:ATP binding"/>
    <property type="evidence" value="ECO:0007669"/>
    <property type="project" value="UniProtKB-KW"/>
</dbReference>
<dbReference type="GO" id="GO:0005536">
    <property type="term" value="F:D-glucose binding"/>
    <property type="evidence" value="ECO:0007669"/>
    <property type="project" value="InterPro"/>
</dbReference>
<dbReference type="GO" id="GO:0004396">
    <property type="term" value="F:hexokinase activity"/>
    <property type="evidence" value="ECO:0007669"/>
    <property type="project" value="UniProtKB-EC"/>
</dbReference>
<dbReference type="GO" id="GO:0006096">
    <property type="term" value="P:glycolytic process"/>
    <property type="evidence" value="ECO:0007669"/>
    <property type="project" value="UniProtKB-UniPathway"/>
</dbReference>
<dbReference type="GO" id="GO:0019318">
    <property type="term" value="P:hexose metabolic process"/>
    <property type="evidence" value="ECO:0007669"/>
    <property type="project" value="UniProtKB-UniPathway"/>
</dbReference>
<dbReference type="GO" id="GO:0001678">
    <property type="term" value="P:intracellular glucose homeostasis"/>
    <property type="evidence" value="ECO:0007669"/>
    <property type="project" value="InterPro"/>
</dbReference>
<dbReference type="CDD" id="cd24020">
    <property type="entry name" value="ASKHA_NBD_HK_plant"/>
    <property type="match status" value="1"/>
</dbReference>
<dbReference type="FunFam" id="3.30.420.40:FF:000034">
    <property type="entry name" value="Phosphotransferase"/>
    <property type="match status" value="1"/>
</dbReference>
<dbReference type="FunFam" id="3.40.367.20:FF:000003">
    <property type="entry name" value="Phosphotransferase"/>
    <property type="match status" value="1"/>
</dbReference>
<dbReference type="Gene3D" id="3.30.420.40">
    <property type="match status" value="1"/>
</dbReference>
<dbReference type="Gene3D" id="3.40.367.20">
    <property type="match status" value="1"/>
</dbReference>
<dbReference type="InterPro" id="IPR043129">
    <property type="entry name" value="ATPase_NBD"/>
</dbReference>
<dbReference type="InterPro" id="IPR001312">
    <property type="entry name" value="Hexokinase"/>
</dbReference>
<dbReference type="InterPro" id="IPR022673">
    <property type="entry name" value="Hexokinase_C"/>
</dbReference>
<dbReference type="InterPro" id="IPR022672">
    <property type="entry name" value="Hexokinase_N"/>
</dbReference>
<dbReference type="PANTHER" id="PTHR19443">
    <property type="entry name" value="HEXOKINASE"/>
    <property type="match status" value="1"/>
</dbReference>
<dbReference type="PANTHER" id="PTHR19443:SF6">
    <property type="entry name" value="HEXOKINASE-4"/>
    <property type="match status" value="1"/>
</dbReference>
<dbReference type="Pfam" id="PF00349">
    <property type="entry name" value="Hexokinase_1"/>
    <property type="match status" value="1"/>
</dbReference>
<dbReference type="Pfam" id="PF03727">
    <property type="entry name" value="Hexokinase_2"/>
    <property type="match status" value="1"/>
</dbReference>
<dbReference type="PRINTS" id="PR00475">
    <property type="entry name" value="HEXOKINASE"/>
</dbReference>
<dbReference type="SUPFAM" id="SSF53067">
    <property type="entry name" value="Actin-like ATPase domain"/>
    <property type="match status" value="2"/>
</dbReference>
<dbReference type="PROSITE" id="PS51748">
    <property type="entry name" value="HEXOKINASE_2"/>
    <property type="match status" value="1"/>
</dbReference>
<protein>
    <recommendedName>
        <fullName>Hexokinase-4</fullName>
        <ecNumber evidence="1">2.7.1.1</ecNumber>
    </recommendedName>
</protein>
<accession>Q56XE8</accession>
<accession>Q9LJZ7</accession>
<comment type="function">
    <text evidence="1">Fructose and glucose phosphorylating enzyme (By similarity). May be involved in the phosphorylation of glucose during the export from mitochondrion to cytosol (By similarity).</text>
</comment>
<comment type="catalytic activity">
    <reaction evidence="1">
        <text>a D-hexose + ATP = a D-hexose 6-phosphate + ADP + H(+)</text>
        <dbReference type="Rhea" id="RHEA:22740"/>
        <dbReference type="ChEBI" id="CHEBI:4194"/>
        <dbReference type="ChEBI" id="CHEBI:15378"/>
        <dbReference type="ChEBI" id="CHEBI:30616"/>
        <dbReference type="ChEBI" id="CHEBI:229467"/>
        <dbReference type="ChEBI" id="CHEBI:456216"/>
        <dbReference type="EC" id="2.7.1.1"/>
    </reaction>
</comment>
<comment type="catalytic activity">
    <reaction evidence="1">
        <text>D-fructose + ATP = D-fructose 6-phosphate + ADP + H(+)</text>
        <dbReference type="Rhea" id="RHEA:16125"/>
        <dbReference type="ChEBI" id="CHEBI:15378"/>
        <dbReference type="ChEBI" id="CHEBI:30616"/>
        <dbReference type="ChEBI" id="CHEBI:37721"/>
        <dbReference type="ChEBI" id="CHEBI:61527"/>
        <dbReference type="ChEBI" id="CHEBI:456216"/>
        <dbReference type="EC" id="2.7.1.1"/>
    </reaction>
</comment>
<comment type="catalytic activity">
    <reaction evidence="1">
        <text>D-glucose + ATP = D-glucose 6-phosphate + ADP + H(+)</text>
        <dbReference type="Rhea" id="RHEA:17825"/>
        <dbReference type="ChEBI" id="CHEBI:4167"/>
        <dbReference type="ChEBI" id="CHEBI:15378"/>
        <dbReference type="ChEBI" id="CHEBI:30616"/>
        <dbReference type="ChEBI" id="CHEBI:61548"/>
        <dbReference type="ChEBI" id="CHEBI:456216"/>
        <dbReference type="EC" id="2.7.1.1"/>
    </reaction>
</comment>
<comment type="pathway">
    <text evidence="1">Carbohydrate metabolism; hexose metabolism.</text>
</comment>
<comment type="pathway">
    <text evidence="1">Carbohydrate degradation; glycolysis; D-glyceraldehyde 3-phosphate and glycerone phosphate from D-glucose: step 1/4.</text>
</comment>
<comment type="subcellular location">
    <subcellularLocation>
        <location evidence="5">Mitochondrion outer membrane</location>
        <topology evidence="5">Single-pass membrane protein</topology>
    </subcellularLocation>
</comment>
<comment type="similarity">
    <text evidence="4 6">Belongs to the hexokinase family.</text>
</comment>
<comment type="sequence caution" evidence="6">
    <conflict type="erroneous initiation">
        <sequence resource="EMBL-CDS" id="BAD93730"/>
    </conflict>
</comment>
<keyword id="KW-0067">ATP-binding</keyword>
<keyword id="KW-0324">Glycolysis</keyword>
<keyword id="KW-0418">Kinase</keyword>
<keyword id="KW-0472">Membrane</keyword>
<keyword id="KW-0496">Mitochondrion</keyword>
<keyword id="KW-1000">Mitochondrion outer membrane</keyword>
<keyword id="KW-0547">Nucleotide-binding</keyword>
<keyword id="KW-1185">Reference proteome</keyword>
<keyword id="KW-0808">Transferase</keyword>
<keyword id="KW-0812">Transmembrane</keyword>
<keyword id="KW-1133">Transmembrane helix</keyword>
<reference key="1">
    <citation type="journal article" date="2000" name="DNA Res.">
        <title>Structural analysis of Arabidopsis thaliana chromosome 3. II. Sequence features of the 4,251,695 bp regions covered by 90 P1, TAC and BAC clones.</title>
        <authorList>
            <person name="Kaneko T."/>
            <person name="Katoh T."/>
            <person name="Sato S."/>
            <person name="Nakamura Y."/>
            <person name="Asamizu E."/>
            <person name="Tabata S."/>
        </authorList>
    </citation>
    <scope>NUCLEOTIDE SEQUENCE [LARGE SCALE GENOMIC DNA]</scope>
    <source>
        <strain>cv. Columbia</strain>
    </source>
</reference>
<reference key="2">
    <citation type="journal article" date="2017" name="Plant J.">
        <title>Araport11: a complete reannotation of the Arabidopsis thaliana reference genome.</title>
        <authorList>
            <person name="Cheng C.Y."/>
            <person name="Krishnakumar V."/>
            <person name="Chan A.P."/>
            <person name="Thibaud-Nissen F."/>
            <person name="Schobel S."/>
            <person name="Town C.D."/>
        </authorList>
    </citation>
    <scope>GENOME REANNOTATION</scope>
    <source>
        <strain>cv. Columbia</strain>
    </source>
</reference>
<reference key="3">
    <citation type="submission" date="2005-03" db="EMBL/GenBank/DDBJ databases">
        <title>Large-scale analysis of RIKEN Arabidopsis full-length (RAFL) cDNAs.</title>
        <authorList>
            <person name="Totoki Y."/>
            <person name="Seki M."/>
            <person name="Ishida J."/>
            <person name="Nakajima M."/>
            <person name="Enju A."/>
            <person name="Kamiya A."/>
            <person name="Narusaka M."/>
            <person name="Shin-i T."/>
            <person name="Nakagawa M."/>
            <person name="Sakamoto N."/>
            <person name="Oishi K."/>
            <person name="Kohara Y."/>
            <person name="Kobayashi M."/>
            <person name="Toyoda A."/>
            <person name="Sakaki Y."/>
            <person name="Sakurai T."/>
            <person name="Iida K."/>
            <person name="Akiyama K."/>
            <person name="Satou M."/>
            <person name="Toyoda T."/>
            <person name="Konagaya A."/>
            <person name="Carninci P."/>
            <person name="Kawai J."/>
            <person name="Hayashizaki Y."/>
            <person name="Shinozaki K."/>
        </authorList>
    </citation>
    <scope>NUCLEOTIDE SEQUENCE [LARGE SCALE MRNA] OF 18-502</scope>
    <source>
        <strain>cv. Columbia</strain>
    </source>
</reference>
<reference key="4">
    <citation type="journal article" date="2004" name="Plant Cell">
        <title>Experimental analysis of the Arabidopsis mitochondrial proteome highlights signaling and regulatory components, provides assessment of targeting prediction programs, and indicates plant-specific mitochondrial proteins.</title>
        <authorList>
            <person name="Heazlewood J.L."/>
            <person name="Tonti-Filippini J.S."/>
            <person name="Gout A.M."/>
            <person name="Day D.A."/>
            <person name="Whelan J."/>
            <person name="Millar A.H."/>
        </authorList>
    </citation>
    <scope>IDENTIFICATION BY MASS SPECTROMETRY</scope>
    <scope>SUBCELLULAR LOCATION [LARGE SCALE ANALYSIS]</scope>
    <source>
        <strain>cv. Landsberg erecta</strain>
    </source>
</reference>
<proteinExistence type="evidence at protein level"/>